<dbReference type="EC" id="3.2.2.-" evidence="5"/>
<dbReference type="EC" id="3.2.2.6"/>
<dbReference type="EC" id="2.4.99.20"/>
<dbReference type="EMBL" id="D30795">
    <property type="protein sequence ID" value="BAA06457.1"/>
    <property type="molecule type" value="mRNA"/>
</dbReference>
<dbReference type="EMBL" id="D29646">
    <property type="protein sequence ID" value="BAA06129.1"/>
    <property type="molecule type" value="mRNA"/>
</dbReference>
<dbReference type="PIR" id="JC2410">
    <property type="entry name" value="JC2410"/>
</dbReference>
<dbReference type="RefSeq" id="NP_037259.1">
    <property type="nucleotide sequence ID" value="NM_013127.2"/>
</dbReference>
<dbReference type="SMR" id="Q64244"/>
<dbReference type="FunCoup" id="Q64244">
    <property type="interactions" value="326"/>
</dbReference>
<dbReference type="STRING" id="10116.ENSRNOP00000004121"/>
<dbReference type="BindingDB" id="Q64244"/>
<dbReference type="ChEMBL" id="CHEMBL5169163"/>
<dbReference type="GlyCosmos" id="Q64244">
    <property type="glycosylation" value="4 sites, 4 glycans"/>
</dbReference>
<dbReference type="GlyGen" id="Q64244">
    <property type="glycosylation" value="4 sites, 4 N-linked glycans (1 site)"/>
</dbReference>
<dbReference type="iPTMnet" id="Q64244"/>
<dbReference type="PhosphoSitePlus" id="Q64244"/>
<dbReference type="SwissPalm" id="Q64244"/>
<dbReference type="PaxDb" id="10116-ENSRNOP00000004121"/>
<dbReference type="Ensembl" id="ENSRNOT00000004121.5">
    <property type="protein sequence ID" value="ENSRNOP00000004121.1"/>
    <property type="gene ID" value="ENSRNOG00000003069.5"/>
</dbReference>
<dbReference type="GeneID" id="25668"/>
<dbReference type="KEGG" id="rno:25668"/>
<dbReference type="AGR" id="RGD:2303"/>
<dbReference type="CTD" id="952"/>
<dbReference type="RGD" id="2303">
    <property type="gene designation" value="Cd38"/>
</dbReference>
<dbReference type="eggNOG" id="ENOG502S1HV">
    <property type="taxonomic scope" value="Eukaryota"/>
</dbReference>
<dbReference type="GeneTree" id="ENSGT00390000017291"/>
<dbReference type="HOGENOM" id="CLU_067834_0_1_1"/>
<dbReference type="InParanoid" id="Q64244"/>
<dbReference type="OMA" id="SCQTCAN"/>
<dbReference type="OrthoDB" id="10028716at2759"/>
<dbReference type="PhylomeDB" id="Q64244"/>
<dbReference type="TreeFam" id="TF332530"/>
<dbReference type="BRENDA" id="2.4.99.20">
    <property type="organism ID" value="5301"/>
</dbReference>
<dbReference type="Reactome" id="R-RNO-196807">
    <property type="pathway name" value="Nicotinate metabolism"/>
</dbReference>
<dbReference type="SABIO-RK" id="Q64244"/>
<dbReference type="PRO" id="PR:Q64244"/>
<dbReference type="Proteomes" id="UP000002494">
    <property type="component" value="Chromosome 14"/>
</dbReference>
<dbReference type="Bgee" id="ENSRNOG00000003069">
    <property type="expression patterns" value="Expressed in spleen and 18 other cell types or tissues"/>
</dbReference>
<dbReference type="GO" id="GO:0016323">
    <property type="term" value="C:basolateral plasma membrane"/>
    <property type="evidence" value="ECO:0000314"/>
    <property type="project" value="RGD"/>
</dbReference>
<dbReference type="GO" id="GO:0009986">
    <property type="term" value="C:cell surface"/>
    <property type="evidence" value="ECO:0000266"/>
    <property type="project" value="RGD"/>
</dbReference>
<dbReference type="GO" id="GO:0016020">
    <property type="term" value="C:membrane"/>
    <property type="evidence" value="ECO:0000266"/>
    <property type="project" value="RGD"/>
</dbReference>
<dbReference type="GO" id="GO:0031965">
    <property type="term" value="C:nuclear membrane"/>
    <property type="evidence" value="ECO:0000314"/>
    <property type="project" value="RGD"/>
</dbReference>
<dbReference type="GO" id="GO:0005886">
    <property type="term" value="C:plasma membrane"/>
    <property type="evidence" value="ECO:0000318"/>
    <property type="project" value="GO_Central"/>
</dbReference>
<dbReference type="GO" id="GO:0016798">
    <property type="term" value="F:hydrolase activity, acting on glycosyl bonds"/>
    <property type="evidence" value="ECO:0000266"/>
    <property type="project" value="RGD"/>
</dbReference>
<dbReference type="GO" id="GO:0042802">
    <property type="term" value="F:identical protein binding"/>
    <property type="evidence" value="ECO:0000266"/>
    <property type="project" value="RGD"/>
</dbReference>
<dbReference type="GO" id="GO:0061809">
    <property type="term" value="F:NAD+ nucleosidase activity, cyclic ADP-ribose generating"/>
    <property type="evidence" value="ECO:0000314"/>
    <property type="project" value="RGD"/>
</dbReference>
<dbReference type="GO" id="GO:0016849">
    <property type="term" value="F:phosphorus-oxygen lyase activity"/>
    <property type="evidence" value="ECO:0000266"/>
    <property type="project" value="RGD"/>
</dbReference>
<dbReference type="GO" id="GO:0016740">
    <property type="term" value="F:transferase activity"/>
    <property type="evidence" value="ECO:0007669"/>
    <property type="project" value="UniProtKB-KW"/>
</dbReference>
<dbReference type="GO" id="GO:0014824">
    <property type="term" value="P:artery smooth muscle contraction"/>
    <property type="evidence" value="ECO:0000315"/>
    <property type="project" value="RGD"/>
</dbReference>
<dbReference type="GO" id="GO:0042100">
    <property type="term" value="P:B cell proliferation"/>
    <property type="evidence" value="ECO:0000266"/>
    <property type="project" value="RGD"/>
</dbReference>
<dbReference type="GO" id="GO:0050853">
    <property type="term" value="P:B cell receptor signaling pathway"/>
    <property type="evidence" value="ECO:0000266"/>
    <property type="project" value="RGD"/>
</dbReference>
<dbReference type="GO" id="GO:0007565">
    <property type="term" value="P:female pregnancy"/>
    <property type="evidence" value="ECO:0000270"/>
    <property type="project" value="RGD"/>
</dbReference>
<dbReference type="GO" id="GO:0060292">
    <property type="term" value="P:long-term synaptic depression"/>
    <property type="evidence" value="ECO:0000315"/>
    <property type="project" value="RGD"/>
</dbReference>
<dbReference type="GO" id="GO:0043066">
    <property type="term" value="P:negative regulation of apoptotic process"/>
    <property type="evidence" value="ECO:0000266"/>
    <property type="project" value="RGD"/>
</dbReference>
<dbReference type="GO" id="GO:0045779">
    <property type="term" value="P:negative regulation of bone resorption"/>
    <property type="evidence" value="ECO:0000314"/>
    <property type="project" value="RGD"/>
</dbReference>
<dbReference type="GO" id="GO:0045892">
    <property type="term" value="P:negative regulation of DNA-templated transcription"/>
    <property type="evidence" value="ECO:0000266"/>
    <property type="project" value="RGD"/>
</dbReference>
<dbReference type="GO" id="GO:0010977">
    <property type="term" value="P:negative regulation of neuron projection development"/>
    <property type="evidence" value="ECO:0000315"/>
    <property type="project" value="RGD"/>
</dbReference>
<dbReference type="GO" id="GO:0030890">
    <property type="term" value="P:positive regulation of B cell proliferation"/>
    <property type="evidence" value="ECO:0000266"/>
    <property type="project" value="RGD"/>
</dbReference>
<dbReference type="GO" id="GO:0030307">
    <property type="term" value="P:positive regulation of cell growth"/>
    <property type="evidence" value="ECO:0000315"/>
    <property type="project" value="RGD"/>
</dbReference>
<dbReference type="GO" id="GO:0008284">
    <property type="term" value="P:positive regulation of cell population proliferation"/>
    <property type="evidence" value="ECO:0000315"/>
    <property type="project" value="RGD"/>
</dbReference>
<dbReference type="GO" id="GO:0007204">
    <property type="term" value="P:positive regulation of cytosolic calcium ion concentration"/>
    <property type="evidence" value="ECO:0000315"/>
    <property type="project" value="RGD"/>
</dbReference>
<dbReference type="GO" id="GO:0045893">
    <property type="term" value="P:positive regulation of DNA-templated transcription"/>
    <property type="evidence" value="ECO:0000266"/>
    <property type="project" value="RGD"/>
</dbReference>
<dbReference type="GO" id="GO:0032024">
    <property type="term" value="P:positive regulation of insulin secretion"/>
    <property type="evidence" value="ECO:0000315"/>
    <property type="project" value="RGD"/>
</dbReference>
<dbReference type="GO" id="GO:0045907">
    <property type="term" value="P:positive regulation of vasoconstriction"/>
    <property type="evidence" value="ECO:0000315"/>
    <property type="project" value="RGD"/>
</dbReference>
<dbReference type="GO" id="GO:0034097">
    <property type="term" value="P:response to cytokine"/>
    <property type="evidence" value="ECO:0000270"/>
    <property type="project" value="RGD"/>
</dbReference>
<dbReference type="GO" id="GO:0032355">
    <property type="term" value="P:response to estradiol"/>
    <property type="evidence" value="ECO:0000270"/>
    <property type="project" value="RGD"/>
</dbReference>
<dbReference type="GO" id="GO:0009725">
    <property type="term" value="P:response to hormone"/>
    <property type="evidence" value="ECO:0000314"/>
    <property type="project" value="RGD"/>
</dbReference>
<dbReference type="GO" id="GO:0033194">
    <property type="term" value="P:response to hydroperoxide"/>
    <property type="evidence" value="ECO:0000314"/>
    <property type="project" value="RGD"/>
</dbReference>
<dbReference type="GO" id="GO:0001666">
    <property type="term" value="P:response to hypoxia"/>
    <property type="evidence" value="ECO:0000314"/>
    <property type="project" value="RGD"/>
</dbReference>
<dbReference type="GO" id="GO:0070555">
    <property type="term" value="P:response to interleukin-1"/>
    <property type="evidence" value="ECO:0000270"/>
    <property type="project" value="RGD"/>
</dbReference>
<dbReference type="GO" id="GO:0032570">
    <property type="term" value="P:response to progesterone"/>
    <property type="evidence" value="ECO:0000270"/>
    <property type="project" value="RGD"/>
</dbReference>
<dbReference type="GO" id="GO:0032526">
    <property type="term" value="P:response to retinoic acid"/>
    <property type="evidence" value="ECO:0000270"/>
    <property type="project" value="RGD"/>
</dbReference>
<dbReference type="GO" id="GO:0009410">
    <property type="term" value="P:response to xenobiotic stimulus"/>
    <property type="evidence" value="ECO:0000266"/>
    <property type="project" value="RGD"/>
</dbReference>
<dbReference type="CDD" id="cd04759">
    <property type="entry name" value="Rib_hydrolase"/>
    <property type="match status" value="1"/>
</dbReference>
<dbReference type="Gene3D" id="1.20.82.10">
    <property type="entry name" value="ADP Ribosyl Cyclase, Chain A, domain 1"/>
    <property type="match status" value="1"/>
</dbReference>
<dbReference type="Gene3D" id="3.40.50.720">
    <property type="entry name" value="NAD(P)-binding Rossmann-like Domain"/>
    <property type="match status" value="1"/>
</dbReference>
<dbReference type="InterPro" id="IPR003193">
    <property type="entry name" value="ADP-ribosyl_cyclase"/>
</dbReference>
<dbReference type="PANTHER" id="PTHR10912">
    <property type="entry name" value="ADP-RIBOSYL CYCLASE"/>
    <property type="match status" value="1"/>
</dbReference>
<dbReference type="PANTHER" id="PTHR10912:SF5">
    <property type="entry name" value="ADP-RIBOSYL CYCLASE_CYCLIC ADP-RIBOSE HYDROLASE 1"/>
    <property type="match status" value="1"/>
</dbReference>
<dbReference type="Pfam" id="PF02267">
    <property type="entry name" value="Rib_hydrolayse"/>
    <property type="match status" value="1"/>
</dbReference>
<dbReference type="SUPFAM" id="SSF52309">
    <property type="entry name" value="N-(deoxy)ribosyltransferase-like"/>
    <property type="match status" value="1"/>
</dbReference>
<comment type="function">
    <text evidence="2 5">Synthesizes the second messengers cyclic ADP-ribose and nicotinate-adenine dinucleotide phosphate, the former a second messenger for glucose-induced insulin secretion, the latter a Ca(2+) mobilizer (PubMed:11829748). Also has cADPR hydrolase activity (By similarity).</text>
</comment>
<comment type="function">
    <text evidence="4">Regulates osteoclastic bone resorption, probably via production of cyclic ADP-ribose and triggering of a cytosolic calcium ion signal through ryanodine receptor activation.</text>
</comment>
<comment type="catalytic activity">
    <reaction evidence="5">
        <text>NAD(+) = cyclic ADP-beta-D-ribose + nicotinamide + H(+)</text>
        <dbReference type="Rhea" id="RHEA:38611"/>
        <dbReference type="ChEBI" id="CHEBI:15378"/>
        <dbReference type="ChEBI" id="CHEBI:17154"/>
        <dbReference type="ChEBI" id="CHEBI:57540"/>
        <dbReference type="ChEBI" id="CHEBI:73672"/>
    </reaction>
    <physiologicalReaction direction="left-to-right" evidence="5">
        <dbReference type="Rhea" id="RHEA:38612"/>
    </physiologicalReaction>
</comment>
<comment type="catalytic activity">
    <reaction evidence="5">
        <text>nicotinate + NADP(+) = nicotinate-adenine dinucleotide phosphate + nicotinamide</text>
        <dbReference type="Rhea" id="RHEA:38599"/>
        <dbReference type="ChEBI" id="CHEBI:17154"/>
        <dbReference type="ChEBI" id="CHEBI:32544"/>
        <dbReference type="ChEBI" id="CHEBI:58349"/>
        <dbReference type="ChEBI" id="CHEBI:75967"/>
        <dbReference type="EC" id="2.4.99.20"/>
    </reaction>
</comment>
<comment type="catalytic activity">
    <reaction>
        <text>NAD(+) + H2O = ADP-D-ribose + nicotinamide + H(+)</text>
        <dbReference type="Rhea" id="RHEA:16301"/>
        <dbReference type="ChEBI" id="CHEBI:15377"/>
        <dbReference type="ChEBI" id="CHEBI:15378"/>
        <dbReference type="ChEBI" id="CHEBI:17154"/>
        <dbReference type="ChEBI" id="CHEBI:57540"/>
        <dbReference type="ChEBI" id="CHEBI:57967"/>
        <dbReference type="EC" id="3.2.2.6"/>
    </reaction>
</comment>
<comment type="activity regulation">
    <text evidence="7">Both NAADP and cADPR synthesis are inhibited by nicotinic acid.</text>
</comment>
<comment type="subunit">
    <text evidence="2">Homodimer.</text>
</comment>
<comment type="subcellular location">
    <subcellularLocation>
        <location evidence="4 7">Cell membrane</location>
        <topology>Single-pass type II membrane protein</topology>
    </subcellularLocation>
</comment>
<comment type="tissue specificity">
    <text evidence="4">Spleen, liver, heart, thymus, thyroid gland, ileum, colon, cerebellum, salivary gland, adrenal gland, jejunum, islets of Langerhans and osteoclasts.</text>
</comment>
<comment type="similarity">
    <text evidence="6">Belongs to the ADP-ribosyl cyclase family.</text>
</comment>
<keyword id="KW-1003">Cell membrane</keyword>
<keyword id="KW-1015">Disulfide bond</keyword>
<keyword id="KW-0325">Glycoprotein</keyword>
<keyword id="KW-0378">Hydrolase</keyword>
<keyword id="KW-0472">Membrane</keyword>
<keyword id="KW-0520">NAD</keyword>
<keyword id="KW-0521">NADP</keyword>
<keyword id="KW-1185">Reference proteome</keyword>
<keyword id="KW-0735">Signal-anchor</keyword>
<keyword id="KW-0808">Transferase</keyword>
<keyword id="KW-0812">Transmembrane</keyword>
<keyword id="KW-1133">Transmembrane helix</keyword>
<gene>
    <name type="primary">Cd38</name>
</gene>
<sequence>MANYEFSQVSEDRPGCRLTRKAQIGLGVGLLLLVALVVVVVIVLWPRSPLVWKGKPTTKHFADIILGRCLIYTQILRPEMRDQDCKKILSTFKRGFISKNPCNITNEDYAPLVKLVTQTIPCNKTLFWSKSKHLAHQYTWIQGKMFTLEDTLLGYIADDLRWCGDPSTSDMNYDSCPHWSENCPNNPVAVFWNVISQKFAEDACGVVQVMLNGSLSEPFYRNSTFGSVEVFNLDPNKVHKLQAWVMHDIKGTSSNACSSPSINELKSIVNKRNMIFACQDNYRPVRFLQCVKNPEHPSCRLNV</sequence>
<reference key="1">
    <citation type="journal article" date="1994" name="Biochem. Biophys. Res. Commun.">
        <title>A cloned rat CD38-homologous protein and its expression in pancreatic islets.</title>
        <authorList>
            <person name="Li Q."/>
            <person name="Yamada Y."/>
            <person name="Yasuda K."/>
            <person name="Ihara Y."/>
            <person name="Okamoto Y."/>
            <person name="Kaisaki P.J."/>
            <person name="Watanabe R."/>
            <person name="Ikeda H."/>
            <person name="Tsuda K."/>
            <person name="Seino Y."/>
        </authorList>
    </citation>
    <scope>NUCLEOTIDE SEQUENCE [MRNA]</scope>
    <source>
        <strain>Wistar</strain>
        <tissue>Brain</tissue>
    </source>
</reference>
<reference key="2">
    <citation type="journal article" date="1994" name="Biochem. Biophys. Res. Commun.">
        <authorList>
            <person name="Li Q."/>
            <person name="Yamada Y."/>
            <person name="Yasuda K."/>
            <person name="Ihara Y."/>
            <person name="Okamoto Y."/>
            <person name="Kaisaki P.J."/>
            <person name="Watanabe R."/>
            <person name="Ikeda H."/>
            <person name="Tsuda K."/>
            <person name="Seino Y."/>
        </authorList>
    </citation>
    <scope>ERRATUM OF PUBMED:8037769</scope>
</reference>
<reference key="3">
    <citation type="journal article" date="1994" name="Biochim. Biophys. Acta">
        <title>Cloning and characterization of cDNA encoding rat ADP-ribosyl cyclase/cyclic ADP-ribose hydrolase (homologue to human CD38) from islets of Langerhans.</title>
        <authorList>
            <person name="Koguma T."/>
            <person name="Takasawa S."/>
            <person name="Tohgo A."/>
            <person name="Karasawa T."/>
            <person name="Furuya Y."/>
            <person name="Yonekura H."/>
            <person name="Okamoto H."/>
        </authorList>
    </citation>
    <scope>NUCLEOTIDE SEQUENCE [MRNA]</scope>
    <source>
        <strain>Wistar</strain>
        <tissue>Pancreatic islet</tissue>
    </source>
</reference>
<reference key="4">
    <citation type="journal article" date="1999" name="J. Cell Biol.">
        <title>CD38/ADP-ribosyl cyclase: a new role in the regulation of osteoclastic bone resorption.</title>
        <authorList>
            <person name="Sun L."/>
            <person name="Adebanjo O.A."/>
            <person name="Moonga B.S."/>
            <person name="Corisdeo S."/>
            <person name="Anandatheerthavarada H.K."/>
            <person name="Biswas G."/>
            <person name="Arakawa T."/>
            <person name="Hakeda Y."/>
            <person name="Koval A."/>
            <person name="Sodam B."/>
            <person name="Bevis P.J.R."/>
            <person name="Moser A.J."/>
            <person name="Lai F.A."/>
            <person name="Epstein S."/>
            <person name="Troen B.R."/>
            <person name="Kumegawa M."/>
            <person name="Zaidi M."/>
        </authorList>
    </citation>
    <scope>FUNCTION</scope>
    <scope>SUBCELLULAR LOCATION</scope>
    <scope>TISSUE SPECIFICITY</scope>
</reference>
<reference key="5">
    <citation type="journal article" date="1999" name="J. Cell Biol.">
        <authorList>
            <person name="Sun L."/>
            <person name="Adebanjo O.A."/>
            <person name="Moonga B.S."/>
            <person name="Corisdeo S."/>
            <person name="Anandatheerthavarada H.K."/>
            <person name="Biswas G."/>
            <person name="Arakawa T."/>
            <person name="Hakeda Y."/>
            <person name="Koval A."/>
            <person name="Sodam B."/>
            <person name="Bevis P.J.R."/>
            <person name="Moser A.J."/>
            <person name="Lai F.A."/>
            <person name="Epstein S."/>
            <person name="Troen B.R."/>
            <person name="Kumegawa M."/>
            <person name="Zaidi M."/>
        </authorList>
    </citation>
    <scope>ERRATUM OF PUBMED:10477767</scope>
</reference>
<reference key="6">
    <citation type="journal article" date="2002" name="Biochem. J.">
        <title>CD38 is the major enzyme responsible for synthesis of nicotinic acid-adenine dinucleotide phosphate in mammalian tissues.</title>
        <authorList>
            <person name="Chini E.N."/>
            <person name="Chini C.C."/>
            <person name="Kato I."/>
            <person name="Takasawa S."/>
            <person name="Okamoto H."/>
        </authorList>
    </citation>
    <scope>FUNCTION IN SYNTHESIS OF NICOTINIC ACID-ADENINE DINUCLEOTIDE PHOSPHATE</scope>
    <scope>ACTIVITY REGULATION</scope>
    <scope>SUBCELLULAR LOCATION</scope>
</reference>
<proteinExistence type="evidence at protein level"/>
<feature type="chain" id="PRO_0000144070" description="ADP-ribosyl cyclase/cyclic ADP-ribose hydrolase 1">
    <location>
        <begin position="1"/>
        <end position="303"/>
    </location>
</feature>
<feature type="topological domain" description="Cytoplasmic" evidence="3">
    <location>
        <begin position="1"/>
        <end position="21"/>
    </location>
</feature>
<feature type="transmembrane region" description="Helical; Signal-anchor for type II membrane protein" evidence="3">
    <location>
        <begin position="22"/>
        <end position="44"/>
    </location>
</feature>
<feature type="topological domain" description="Extracellular" evidence="3">
    <location>
        <begin position="45"/>
        <end position="303"/>
    </location>
</feature>
<feature type="active site" evidence="1">
    <location>
        <position position="122"/>
    </location>
</feature>
<feature type="active site" evidence="1">
    <location>
        <position position="204"/>
    </location>
</feature>
<feature type="glycosylation site" description="N-linked (GlcNAc...) asparagine" evidence="3">
    <location>
        <position position="103"/>
    </location>
</feature>
<feature type="glycosylation site" description="N-linked (GlcNAc...) asparagine" evidence="3">
    <location>
        <position position="123"/>
    </location>
</feature>
<feature type="glycosylation site" description="N-linked (GlcNAc...) asparagine" evidence="3">
    <location>
        <position position="212"/>
    </location>
</feature>
<feature type="glycosylation site" description="N-linked (GlcNAc...) asparagine" evidence="3">
    <location>
        <position position="222"/>
    </location>
</feature>
<feature type="disulfide bond" evidence="1">
    <location>
        <begin position="69"/>
        <end position="85"/>
    </location>
</feature>
<feature type="disulfide bond" evidence="1">
    <location>
        <begin position="102"/>
        <end position="183"/>
    </location>
</feature>
<feature type="disulfide bond" evidence="1">
    <location>
        <begin position="163"/>
        <end position="176"/>
    </location>
</feature>
<feature type="disulfide bond" evidence="1">
    <location>
        <begin position="257"/>
        <end position="278"/>
    </location>
</feature>
<feature type="disulfide bond" evidence="1">
    <location>
        <begin position="290"/>
        <end position="299"/>
    </location>
</feature>
<accession>Q64244</accession>
<evidence type="ECO:0000250" key="1"/>
<evidence type="ECO:0000250" key="2">
    <source>
        <dbReference type="UniProtKB" id="P28907"/>
    </source>
</evidence>
<evidence type="ECO:0000255" key="3"/>
<evidence type="ECO:0000269" key="4">
    <source>
    </source>
</evidence>
<evidence type="ECO:0000269" key="5">
    <source>
    </source>
</evidence>
<evidence type="ECO:0000305" key="6"/>
<evidence type="ECO:0000305" key="7">
    <source>
    </source>
</evidence>
<name>CD38_RAT</name>
<protein>
    <recommendedName>
        <fullName>ADP-ribosyl cyclase/cyclic ADP-ribose hydrolase 1</fullName>
        <ecNumber evidence="5">3.2.2.-</ecNumber>
        <ecNumber>3.2.2.6</ecNumber>
    </recommendedName>
    <alternativeName>
        <fullName>2'-phospho-ADP-ribosyl cyclase</fullName>
    </alternativeName>
    <alternativeName>
        <fullName>2'-phospho-ADP-ribosyl cyclase/2'-phospho-cyclic-ADP-ribose transferase</fullName>
        <ecNumber>2.4.99.20</ecNumber>
    </alternativeName>
    <alternativeName>
        <fullName>2'-phospho-cyclic-ADP-ribose transferase</fullName>
    </alternativeName>
    <alternativeName>
        <fullName>ADP-ribosyl cyclase 1</fullName>
        <shortName>ADPRC 1</shortName>
    </alternativeName>
    <alternativeName>
        <fullName>CD38H</fullName>
    </alternativeName>
    <alternativeName>
        <fullName>Cyclic ADP-ribose hydrolase 1</fullName>
        <shortName>cADPR hydrolase 1</shortName>
    </alternativeName>
    <cdAntigenName>CD38</cdAntigenName>
</protein>
<organism>
    <name type="scientific">Rattus norvegicus</name>
    <name type="common">Rat</name>
    <dbReference type="NCBI Taxonomy" id="10116"/>
    <lineage>
        <taxon>Eukaryota</taxon>
        <taxon>Metazoa</taxon>
        <taxon>Chordata</taxon>
        <taxon>Craniata</taxon>
        <taxon>Vertebrata</taxon>
        <taxon>Euteleostomi</taxon>
        <taxon>Mammalia</taxon>
        <taxon>Eutheria</taxon>
        <taxon>Euarchontoglires</taxon>
        <taxon>Glires</taxon>
        <taxon>Rodentia</taxon>
        <taxon>Myomorpha</taxon>
        <taxon>Muroidea</taxon>
        <taxon>Muridae</taxon>
        <taxon>Murinae</taxon>
        <taxon>Rattus</taxon>
    </lineage>
</organism>